<comment type="function">
    <text evidence="3 5 9">Transcriptional coactivator of the p300/CBP-mediated transcription complex. Enhances SMAD-mediated transcription by strengthening the functional link between the DNA-binding SMAD transcription factors and the p300/CBP transcription coactivator complex. Stimulates estrogen-dependent transactivation activity mediated by estrogen receptors signaling; stabilizes the interaction of estrogen receptor ESR1 and histone acetyltransferase EP300. Positively regulates TGF-beta signaling through its association with the SMAD/p300/CBP-mediated transcriptional coactivator complex. Induces transcription from estrogen-responsive promoters and protection against cell death. Potentiates EGR2-mediated transcriptional activation activity from the ERBB2 promoter. Acts as an inhibitor of osteoblastic mineralization through a cAMP-dependent parathyroid hormone receptor signaling. May play a role in pigmentation of melanocytes. Associates with chromatin to the estrogen-responsive TGF-alpha promoter region in a estrogen-dependent manner.</text>
</comment>
<comment type="subunit">
    <text evidence="1 3 4 5 7 9 11">Interacts (via C-terminus) with CREBBP. Interacts with EGR2 (By similarity). Homodimer. Binds to RBM14. Interacts (via N-terminus) with HSPA8; the interaction suppresses the association of CITED1 with p300/CBP and SMAD-mediated transcription transactivation. Interacts (via C-terminus) with TOX3 (via HGM box); the interaction increases estrogen-response element (ERE)-dependent transcription and protection against cell death. Interacts with ESR1; the interaction occurs in a estrogen-dependent manner (By similarity). Interacts (unphosphorylated form preferentially and via C-terminus) with EP300.</text>
</comment>
<comment type="interaction">
    <interactant intactId="EBI-2624951">
        <id>Q99966</id>
    </interactant>
    <interactant intactId="EBI-1170906">
        <id>P15336</id>
        <label>ATF2</label>
    </interactant>
    <organismsDiffer>false</organismsDiffer>
    <experiments>2</experiments>
</comment>
<comment type="interaction">
    <interactant intactId="EBI-2624951">
        <id>Q99966</id>
    </interactant>
    <interactant intactId="EBI-718729">
        <id>P55212</id>
        <label>CASP6</label>
    </interactant>
    <organismsDiffer>false</organismsDiffer>
    <experiments>3</experiments>
</comment>
<comment type="interaction">
    <interactant intactId="EBI-2624951">
        <id>Q99966</id>
    </interactant>
    <interactant intactId="EBI-6624398">
        <id>P06307</id>
        <label>CCK</label>
    </interactant>
    <organismsDiffer>false</organismsDiffer>
    <experiments>3</experiments>
</comment>
<comment type="interaction">
    <interactant intactId="EBI-2624951">
        <id>Q99966</id>
    </interactant>
    <interactant intactId="EBI-78473">
        <id>P03372</id>
        <label>ESR1</label>
    </interactant>
    <organismsDiffer>false</organismsDiffer>
    <experiments>3</experiments>
</comment>
<comment type="interaction">
    <interactant intactId="EBI-2624951">
        <id>Q99966</id>
    </interactant>
    <interactant intactId="EBI-10226858">
        <id>Q0VDC6</id>
        <label>FKBP1A</label>
    </interactant>
    <organismsDiffer>false</organismsDiffer>
    <experiments>3</experiments>
</comment>
<comment type="interaction">
    <interactant intactId="EBI-2624951">
        <id>Q99966</id>
    </interactant>
    <interactant intactId="EBI-852823">
        <id>P05412</id>
        <label>JUN</label>
    </interactant>
    <organismsDiffer>false</organismsDiffer>
    <experiments>2</experiments>
</comment>
<comment type="interaction">
    <interactant intactId="EBI-2624951">
        <id>Q99966</id>
    </interactant>
    <interactant intactId="EBI-21591415">
        <id>P13473-2</id>
        <label>LAMP2</label>
    </interactant>
    <organismsDiffer>false</organismsDiffer>
    <experiments>3</experiments>
</comment>
<comment type="subcellular location">
    <subcellularLocation>
        <location evidence="7">Nucleus</location>
    </subcellularLocation>
    <subcellularLocation>
        <location evidence="7">Cytoplasm</location>
    </subcellularLocation>
    <text>Shuttles between the nucleus and the cytoplasm by a nuclear export signal and (NES) in a CRM1-dependent manner.</text>
</comment>
<comment type="alternative products">
    <event type="alternative splicing"/>
    <isoform>
        <id>Q99966-1</id>
        <name>1</name>
        <sequence type="displayed"/>
    </isoform>
    <isoform>
        <id>Q99966-2</id>
        <name>2</name>
        <sequence type="described" ref="VSP_039897"/>
    </isoform>
</comment>
<comment type="tissue specificity">
    <text>Expressed only in melanocytes and testis.</text>
</comment>
<comment type="induction">
    <text evidence="9">Up-regulated by GPR39 in neuronal cells.</text>
</comment>
<comment type="PTM">
    <text evidence="7">Phosphorylated. Phosphorylation changes in a cell cycle-dependent manner and reduces its transcriptional coactivator activity.</text>
</comment>
<comment type="similarity">
    <text evidence="14">Belongs to the CITED family.</text>
</comment>
<comment type="sequence caution" evidence="14">
    <conflict type="frameshift">
        <sequence resource="EMBL" id="N30508"/>
    </conflict>
</comment>
<accession>Q99966</accession>
<accession>B5BU50</accession>
<accession>B5BUI2</accession>
<keyword id="KW-0010">Activator</keyword>
<keyword id="KW-0025">Alternative splicing</keyword>
<keyword id="KW-0053">Apoptosis</keyword>
<keyword id="KW-0963">Cytoplasm</keyword>
<keyword id="KW-0217">Developmental protein</keyword>
<keyword id="KW-0221">Differentiation</keyword>
<keyword id="KW-0539">Nucleus</keyword>
<keyword id="KW-0597">Phosphoprotein</keyword>
<keyword id="KW-1267">Proteomics identification</keyword>
<keyword id="KW-1185">Reference proteome</keyword>
<keyword id="KW-0804">Transcription</keyword>
<keyword id="KW-0805">Transcription regulation</keyword>
<reference key="1">
    <citation type="journal article" date="1996" name="Proc. Natl. Acad. Sci. U.S.A.">
        <title>msg1, a novel melanocyte-specific gene, encodes a nuclear protein and is associated with pigmentation.</title>
        <authorList>
            <person name="Shioda T."/>
            <person name="Fenner M.H."/>
            <person name="Isselbacher K.J."/>
        </authorList>
    </citation>
    <scope>NUCLEOTIDE SEQUENCE [MRNA] (ISOFORM 1)</scope>
    <scope>VARIANT GLN-96</scope>
</reference>
<reference key="2">
    <citation type="journal article" date="2008" name="Nat. Methods">
        <title>Human protein factory for converting the transcriptome into an in vitro-expressed proteome.</title>
        <authorList>
            <person name="Goshima N."/>
            <person name="Kawamura Y."/>
            <person name="Fukumoto A."/>
            <person name="Miura A."/>
            <person name="Honma R."/>
            <person name="Satoh R."/>
            <person name="Wakamatsu A."/>
            <person name="Yamamoto J."/>
            <person name="Kimura K."/>
            <person name="Nishikawa T."/>
            <person name="Andoh T."/>
            <person name="Iida Y."/>
            <person name="Ishikawa K."/>
            <person name="Ito E."/>
            <person name="Kagawa N."/>
            <person name="Kaminaga C."/>
            <person name="Kanehori K."/>
            <person name="Kawakami B."/>
            <person name="Kenmochi K."/>
            <person name="Kimura R."/>
            <person name="Kobayashi M."/>
            <person name="Kuroita T."/>
            <person name="Kuwayama H."/>
            <person name="Maruyama Y."/>
            <person name="Matsuo K."/>
            <person name="Minami K."/>
            <person name="Mitsubori M."/>
            <person name="Mori M."/>
            <person name="Morishita R."/>
            <person name="Murase A."/>
            <person name="Nishikawa A."/>
            <person name="Nishikawa S."/>
            <person name="Okamoto T."/>
            <person name="Sakagami N."/>
            <person name="Sakamoto Y."/>
            <person name="Sasaki Y."/>
            <person name="Seki T."/>
            <person name="Sono S."/>
            <person name="Sugiyama A."/>
            <person name="Sumiya T."/>
            <person name="Takayama T."/>
            <person name="Takayama Y."/>
            <person name="Takeda H."/>
            <person name="Togashi T."/>
            <person name="Yahata K."/>
            <person name="Yamada H."/>
            <person name="Yanagisawa Y."/>
            <person name="Endo Y."/>
            <person name="Imamoto F."/>
            <person name="Kisu Y."/>
            <person name="Tanaka S."/>
            <person name="Isogai T."/>
            <person name="Imai J."/>
            <person name="Watanabe S."/>
            <person name="Nomura N."/>
        </authorList>
    </citation>
    <scope>NUCLEOTIDE SEQUENCE [LARGE SCALE MRNA] (ISOFORM 1)</scope>
    <scope>VARIANT GLN-96</scope>
</reference>
<reference key="3">
    <citation type="journal article" date="2005" name="Nature">
        <title>The DNA sequence of the human X chromosome.</title>
        <authorList>
            <person name="Ross M.T."/>
            <person name="Grafham D.V."/>
            <person name="Coffey A.J."/>
            <person name="Scherer S."/>
            <person name="McLay K."/>
            <person name="Muzny D."/>
            <person name="Platzer M."/>
            <person name="Howell G.R."/>
            <person name="Burrows C."/>
            <person name="Bird C.P."/>
            <person name="Frankish A."/>
            <person name="Lovell F.L."/>
            <person name="Howe K.L."/>
            <person name="Ashurst J.L."/>
            <person name="Fulton R.S."/>
            <person name="Sudbrak R."/>
            <person name="Wen G."/>
            <person name="Jones M.C."/>
            <person name="Hurles M.E."/>
            <person name="Andrews T.D."/>
            <person name="Scott C.E."/>
            <person name="Searle S."/>
            <person name="Ramser J."/>
            <person name="Whittaker A."/>
            <person name="Deadman R."/>
            <person name="Carter N.P."/>
            <person name="Hunt S.E."/>
            <person name="Chen R."/>
            <person name="Cree A."/>
            <person name="Gunaratne P."/>
            <person name="Havlak P."/>
            <person name="Hodgson A."/>
            <person name="Metzker M.L."/>
            <person name="Richards S."/>
            <person name="Scott G."/>
            <person name="Steffen D."/>
            <person name="Sodergren E."/>
            <person name="Wheeler D.A."/>
            <person name="Worley K.C."/>
            <person name="Ainscough R."/>
            <person name="Ambrose K.D."/>
            <person name="Ansari-Lari M.A."/>
            <person name="Aradhya S."/>
            <person name="Ashwell R.I."/>
            <person name="Babbage A.K."/>
            <person name="Bagguley C.L."/>
            <person name="Ballabio A."/>
            <person name="Banerjee R."/>
            <person name="Barker G.E."/>
            <person name="Barlow K.F."/>
            <person name="Barrett I.P."/>
            <person name="Bates K.N."/>
            <person name="Beare D.M."/>
            <person name="Beasley H."/>
            <person name="Beasley O."/>
            <person name="Beck A."/>
            <person name="Bethel G."/>
            <person name="Blechschmidt K."/>
            <person name="Brady N."/>
            <person name="Bray-Allen S."/>
            <person name="Bridgeman A.M."/>
            <person name="Brown A.J."/>
            <person name="Brown M.J."/>
            <person name="Bonnin D."/>
            <person name="Bruford E.A."/>
            <person name="Buhay C."/>
            <person name="Burch P."/>
            <person name="Burford D."/>
            <person name="Burgess J."/>
            <person name="Burrill W."/>
            <person name="Burton J."/>
            <person name="Bye J.M."/>
            <person name="Carder C."/>
            <person name="Carrel L."/>
            <person name="Chako J."/>
            <person name="Chapman J.C."/>
            <person name="Chavez D."/>
            <person name="Chen E."/>
            <person name="Chen G."/>
            <person name="Chen Y."/>
            <person name="Chen Z."/>
            <person name="Chinault C."/>
            <person name="Ciccodicola A."/>
            <person name="Clark S.Y."/>
            <person name="Clarke G."/>
            <person name="Clee C.M."/>
            <person name="Clegg S."/>
            <person name="Clerc-Blankenburg K."/>
            <person name="Clifford K."/>
            <person name="Cobley V."/>
            <person name="Cole C.G."/>
            <person name="Conquer J.S."/>
            <person name="Corby N."/>
            <person name="Connor R.E."/>
            <person name="David R."/>
            <person name="Davies J."/>
            <person name="Davis C."/>
            <person name="Davis J."/>
            <person name="Delgado O."/>
            <person name="Deshazo D."/>
            <person name="Dhami P."/>
            <person name="Ding Y."/>
            <person name="Dinh H."/>
            <person name="Dodsworth S."/>
            <person name="Draper H."/>
            <person name="Dugan-Rocha S."/>
            <person name="Dunham A."/>
            <person name="Dunn M."/>
            <person name="Durbin K.J."/>
            <person name="Dutta I."/>
            <person name="Eades T."/>
            <person name="Ellwood M."/>
            <person name="Emery-Cohen A."/>
            <person name="Errington H."/>
            <person name="Evans K.L."/>
            <person name="Faulkner L."/>
            <person name="Francis F."/>
            <person name="Frankland J."/>
            <person name="Fraser A.E."/>
            <person name="Galgoczy P."/>
            <person name="Gilbert J."/>
            <person name="Gill R."/>
            <person name="Gloeckner G."/>
            <person name="Gregory S.G."/>
            <person name="Gribble S."/>
            <person name="Griffiths C."/>
            <person name="Grocock R."/>
            <person name="Gu Y."/>
            <person name="Gwilliam R."/>
            <person name="Hamilton C."/>
            <person name="Hart E.A."/>
            <person name="Hawes A."/>
            <person name="Heath P.D."/>
            <person name="Heitmann K."/>
            <person name="Hennig S."/>
            <person name="Hernandez J."/>
            <person name="Hinzmann B."/>
            <person name="Ho S."/>
            <person name="Hoffs M."/>
            <person name="Howden P.J."/>
            <person name="Huckle E.J."/>
            <person name="Hume J."/>
            <person name="Hunt P.J."/>
            <person name="Hunt A.R."/>
            <person name="Isherwood J."/>
            <person name="Jacob L."/>
            <person name="Johnson D."/>
            <person name="Jones S."/>
            <person name="de Jong P.J."/>
            <person name="Joseph S.S."/>
            <person name="Keenan S."/>
            <person name="Kelly S."/>
            <person name="Kershaw J.K."/>
            <person name="Khan Z."/>
            <person name="Kioschis P."/>
            <person name="Klages S."/>
            <person name="Knights A.J."/>
            <person name="Kosiura A."/>
            <person name="Kovar-Smith C."/>
            <person name="Laird G.K."/>
            <person name="Langford C."/>
            <person name="Lawlor S."/>
            <person name="Leversha M."/>
            <person name="Lewis L."/>
            <person name="Liu W."/>
            <person name="Lloyd C."/>
            <person name="Lloyd D.M."/>
            <person name="Loulseged H."/>
            <person name="Loveland J.E."/>
            <person name="Lovell J.D."/>
            <person name="Lozado R."/>
            <person name="Lu J."/>
            <person name="Lyne R."/>
            <person name="Ma J."/>
            <person name="Maheshwari M."/>
            <person name="Matthews L.H."/>
            <person name="McDowall J."/>
            <person name="McLaren S."/>
            <person name="McMurray A."/>
            <person name="Meidl P."/>
            <person name="Meitinger T."/>
            <person name="Milne S."/>
            <person name="Miner G."/>
            <person name="Mistry S.L."/>
            <person name="Morgan M."/>
            <person name="Morris S."/>
            <person name="Mueller I."/>
            <person name="Mullikin J.C."/>
            <person name="Nguyen N."/>
            <person name="Nordsiek G."/>
            <person name="Nyakatura G."/>
            <person name="O'dell C.N."/>
            <person name="Okwuonu G."/>
            <person name="Palmer S."/>
            <person name="Pandian R."/>
            <person name="Parker D."/>
            <person name="Parrish J."/>
            <person name="Pasternak S."/>
            <person name="Patel D."/>
            <person name="Pearce A.V."/>
            <person name="Pearson D.M."/>
            <person name="Pelan S.E."/>
            <person name="Perez L."/>
            <person name="Porter K.M."/>
            <person name="Ramsey Y."/>
            <person name="Reichwald K."/>
            <person name="Rhodes S."/>
            <person name="Ridler K.A."/>
            <person name="Schlessinger D."/>
            <person name="Schueler M.G."/>
            <person name="Sehra H.K."/>
            <person name="Shaw-Smith C."/>
            <person name="Shen H."/>
            <person name="Sheridan E.M."/>
            <person name="Shownkeen R."/>
            <person name="Skuce C.D."/>
            <person name="Smith M.L."/>
            <person name="Sotheran E.C."/>
            <person name="Steingruber H.E."/>
            <person name="Steward C.A."/>
            <person name="Storey R."/>
            <person name="Swann R.M."/>
            <person name="Swarbreck D."/>
            <person name="Tabor P.E."/>
            <person name="Taudien S."/>
            <person name="Taylor T."/>
            <person name="Teague B."/>
            <person name="Thomas K."/>
            <person name="Thorpe A."/>
            <person name="Timms K."/>
            <person name="Tracey A."/>
            <person name="Trevanion S."/>
            <person name="Tromans A.C."/>
            <person name="d'Urso M."/>
            <person name="Verduzco D."/>
            <person name="Villasana D."/>
            <person name="Waldron L."/>
            <person name="Wall M."/>
            <person name="Wang Q."/>
            <person name="Warren J."/>
            <person name="Warry G.L."/>
            <person name="Wei X."/>
            <person name="West A."/>
            <person name="Whitehead S.L."/>
            <person name="Whiteley M.N."/>
            <person name="Wilkinson J.E."/>
            <person name="Willey D.L."/>
            <person name="Williams G."/>
            <person name="Williams L."/>
            <person name="Williamson A."/>
            <person name="Williamson H."/>
            <person name="Wilming L."/>
            <person name="Woodmansey R.L."/>
            <person name="Wray P.W."/>
            <person name="Yen J."/>
            <person name="Zhang J."/>
            <person name="Zhou J."/>
            <person name="Zoghbi H."/>
            <person name="Zorilla S."/>
            <person name="Buck D."/>
            <person name="Reinhardt R."/>
            <person name="Poustka A."/>
            <person name="Rosenthal A."/>
            <person name="Lehrach H."/>
            <person name="Meindl A."/>
            <person name="Minx P.J."/>
            <person name="Hillier L.W."/>
            <person name="Willard H.F."/>
            <person name="Wilson R.K."/>
            <person name="Waterston R.H."/>
            <person name="Rice C.M."/>
            <person name="Vaudin M."/>
            <person name="Coulson A."/>
            <person name="Nelson D.L."/>
            <person name="Weinstock G."/>
            <person name="Sulston J.E."/>
            <person name="Durbin R.M."/>
            <person name="Hubbard T."/>
            <person name="Gibbs R.A."/>
            <person name="Beck S."/>
            <person name="Rogers J."/>
            <person name="Bentley D.R."/>
        </authorList>
    </citation>
    <scope>NUCLEOTIDE SEQUENCE [LARGE SCALE GENOMIC DNA]</scope>
</reference>
<reference key="4">
    <citation type="submission" date="2005-07" db="EMBL/GenBank/DDBJ databases">
        <authorList>
            <person name="Mural R.J."/>
            <person name="Istrail S."/>
            <person name="Sutton G.G."/>
            <person name="Florea L."/>
            <person name="Halpern A.L."/>
            <person name="Mobarry C.M."/>
            <person name="Lippert R."/>
            <person name="Walenz B."/>
            <person name="Shatkay H."/>
            <person name="Dew I."/>
            <person name="Miller J.R."/>
            <person name="Flanigan M.J."/>
            <person name="Edwards N.J."/>
            <person name="Bolanos R."/>
            <person name="Fasulo D."/>
            <person name="Halldorsson B.V."/>
            <person name="Hannenhalli S."/>
            <person name="Turner R."/>
            <person name="Yooseph S."/>
            <person name="Lu F."/>
            <person name="Nusskern D.R."/>
            <person name="Shue B.C."/>
            <person name="Zheng X.H."/>
            <person name="Zhong F."/>
            <person name="Delcher A.L."/>
            <person name="Huson D.H."/>
            <person name="Kravitz S.A."/>
            <person name="Mouchard L."/>
            <person name="Reinert K."/>
            <person name="Remington K.A."/>
            <person name="Clark A.G."/>
            <person name="Waterman M.S."/>
            <person name="Eichler E.E."/>
            <person name="Adams M.D."/>
            <person name="Hunkapiller M.W."/>
            <person name="Myers E.W."/>
            <person name="Venter J.C."/>
        </authorList>
    </citation>
    <scope>NUCLEOTIDE SEQUENCE [LARGE SCALE GENOMIC DNA]</scope>
    <scope>VARIANT GLN-96</scope>
</reference>
<reference key="5">
    <citation type="journal article" date="2004" name="Genome Res.">
        <title>The status, quality, and expansion of the NIH full-length cDNA project: the Mammalian Gene Collection (MGC).</title>
        <authorList>
            <consortium name="The MGC Project Team"/>
        </authorList>
    </citation>
    <scope>NUCLEOTIDE SEQUENCE [LARGE SCALE MRNA]</scope>
    <scope>VARIANT GLN-96</scope>
    <source>
        <tissue>Brain</tissue>
    </source>
</reference>
<reference key="6">
    <citation type="submission" date="2008-10" db="EMBL/GenBank/DDBJ databases">
        <title>WashU-NCI human EST project.</title>
        <authorList>
            <person name="Hillier L."/>
            <person name="Allen M."/>
            <person name="Bowles L."/>
            <person name="Dubuque T."/>
            <person name="Geisel G."/>
            <person name="Jost S."/>
            <person name="Krizman D."/>
            <person name="Kucaba T."/>
            <person name="Lacy M."/>
            <person name="Le N."/>
            <person name="Lennon G."/>
            <person name="Marra M."/>
            <person name="Martin J."/>
            <person name="Moore B."/>
            <person name="Schellenberg K."/>
            <person name="Steptoe M."/>
            <person name="Tan F."/>
            <person name="Theising B."/>
            <person name="White Y."/>
            <person name="Wylie T."/>
            <person name="Waterston R."/>
            <person name="Wilson R."/>
        </authorList>
    </citation>
    <scope>NUCLEOTIDE SEQUENCE [MRNA] OF 1-86 (ISOFORM 2)</scope>
    <source>
        <tissue>Melanocyte</tissue>
    </source>
</reference>
<reference key="7">
    <citation type="journal article" date="1998" name="Proc. Natl. Acad. Sci. U.S.A.">
        <title>Transcriptional activating activity of Smad4: roles of SMAD hetero-oligomerization and enhancement by an associating transactivator.</title>
        <authorList>
            <person name="Shioda T."/>
            <person name="Lechleider R.J."/>
            <person name="Dunwoodie S.L."/>
            <person name="Li H."/>
            <person name="Yahata T."/>
            <person name="de Caestecker M.P."/>
            <person name="Fenner M.H."/>
            <person name="Roberts A.B."/>
            <person name="Isselbacher K.J."/>
        </authorList>
    </citation>
    <scope>INTERACTION WITH SMAD4</scope>
</reference>
<reference key="8">
    <citation type="journal article" date="2000" name="J. Biol. Chem.">
        <title>The MSG1 non-DNA-binding transactivator binds to the p300/CBP coactivators, enhancing their functional link to the Smad transcription factors.</title>
        <authorList>
            <person name="Yahata T."/>
            <person name="de Caestecker M.P."/>
            <person name="Lechleider R.J."/>
            <person name="Andriole S."/>
            <person name="Roberts A.B."/>
            <person name="Isselbacher K.J."/>
            <person name="Shioda T."/>
        </authorList>
    </citation>
    <scope>FUNCTION</scope>
    <scope>INTERACTION WITH CREBBP; EP300 AND HSPA8</scope>
</reference>
<reference key="9">
    <citation type="journal article" date="2001" name="Genes Dev.">
        <title>Selective coactivation of estrogen-dependent transcription by CITED1 CBP/p300-binding protein.</title>
        <authorList>
            <person name="Yahata T."/>
            <person name="Shao W."/>
            <person name="Endoh H."/>
            <person name="Hur J."/>
            <person name="Coser K.R."/>
            <person name="Sun H."/>
            <person name="Ueda Y."/>
            <person name="Kato S."/>
            <person name="Isselbacher K.J."/>
            <person name="Brown M."/>
            <person name="Shioda T."/>
        </authorList>
    </citation>
    <scope>FUNCTION</scope>
    <scope>INTERACTION WITH ESR1</scope>
    <scope>ASSOCIATION WITH CHROMATIN</scope>
    <scope>MUTAGENESIS OF 155-GLU-GLU-156; 157-VAL-LEU-158; 159-MET-SER-160; 161-LEU-VAL-162; 163-VAL-GLU-164; LEU-165 AND 166-GLY-LEU-167</scope>
</reference>
<reference key="10">
    <citation type="journal article" date="2001" name="J. Biol. Chem.">
        <title>Identification and characterization of RRM-containing coactivator activator (CoAA) as TRBP-interacting protein, and its splice variant as a coactivator modulator (CoAM).</title>
        <authorList>
            <person name="Iwasaki T."/>
            <person name="Chin W.W."/>
            <person name="Ko L."/>
        </authorList>
    </citation>
    <scope>INTERACTION WITH RBM14</scope>
</reference>
<reference key="11">
    <citation type="journal article" date="2006" name="J. Biol. Chem.">
        <title>The transcriptional activity of CITED1 is regulated by phosphorylation in a cell cycle-dependent manner.</title>
        <authorList>
            <person name="Shi G."/>
            <person name="Boyle S.C."/>
            <person name="Sparrow D.B."/>
            <person name="Dunwoodie S.L."/>
            <person name="Shioda T."/>
            <person name="de Caestecker M.P."/>
        </authorList>
    </citation>
    <scope>PHOSPHORYLATION</scope>
    <scope>INTERACTION WITH EP300</scope>
    <scope>SUBCELLULAR LOCATION</scope>
    <scope>MUTAGENESIS OF SER-16; SER-63; SER-67; SER-71 AND SER-137</scope>
</reference>
<reference key="12">
    <citation type="journal article" date="2008" name="Proc. Natl. Acad. Sci. U.S.A.">
        <title>A quantitative atlas of mitotic phosphorylation.</title>
        <authorList>
            <person name="Dephoure N."/>
            <person name="Zhou C."/>
            <person name="Villen J."/>
            <person name="Beausoleil S.A."/>
            <person name="Bakalarski C.E."/>
            <person name="Elledge S.J."/>
            <person name="Gygi S.P."/>
        </authorList>
    </citation>
    <scope>IDENTIFICATION BY MASS SPECTROMETRY [LARGE SCALE ANALYSIS]</scope>
    <source>
        <tissue>Cervix carcinoma</tissue>
    </source>
</reference>
<reference key="13">
    <citation type="journal article" date="2011" name="J. Cell Sci.">
        <title>TOX3 is a neuronal survival factor that induces transcription depending on the presence of CITED1 or phosphorylated CREB in the transcriptionally active complex.</title>
        <authorList>
            <person name="Dittmer S."/>
            <person name="Kovacs Z."/>
            <person name="Yuan S.H."/>
            <person name="Siszler G."/>
            <person name="Kogl M."/>
            <person name="Summer H."/>
            <person name="Geerts A."/>
            <person name="Golz S."/>
            <person name="Shioda T."/>
            <person name="Methner A."/>
        </authorList>
    </citation>
    <scope>FUNCTION</scope>
    <scope>HOMODIMERIZATION</scope>
    <scope>INDUCTION</scope>
    <scope>INTERACTION WITH TOX3</scope>
</reference>
<reference key="14">
    <citation type="journal article" date="2013" name="J. Proteome Res.">
        <title>Toward a comprehensive characterization of a human cancer cell phosphoproteome.</title>
        <authorList>
            <person name="Zhou H."/>
            <person name="Di Palma S."/>
            <person name="Preisinger C."/>
            <person name="Peng M."/>
            <person name="Polat A.N."/>
            <person name="Heck A.J."/>
            <person name="Mohammed S."/>
        </authorList>
    </citation>
    <scope>IDENTIFICATION BY MASS SPECTROMETRY [LARGE SCALE ANALYSIS]</scope>
    <source>
        <tissue>Cervix carcinoma</tissue>
        <tissue>Erythroleukemia</tissue>
    </source>
</reference>
<dbReference type="EMBL" id="U65092">
    <property type="protein sequence ID" value="AAC51113.1"/>
    <property type="molecule type" value="mRNA"/>
</dbReference>
<dbReference type="EMBL" id="AB451286">
    <property type="protein sequence ID" value="BAG70100.1"/>
    <property type="molecule type" value="mRNA"/>
</dbReference>
<dbReference type="EMBL" id="AB451418">
    <property type="protein sequence ID" value="BAG70232.1"/>
    <property type="molecule type" value="mRNA"/>
</dbReference>
<dbReference type="EMBL" id="AL135749">
    <property type="status" value="NOT_ANNOTATED_CDS"/>
    <property type="molecule type" value="Genomic_DNA"/>
</dbReference>
<dbReference type="EMBL" id="CH471213">
    <property type="protein sequence ID" value="EAW71819.1"/>
    <property type="molecule type" value="Genomic_DNA"/>
</dbReference>
<dbReference type="EMBL" id="BC004240">
    <property type="protein sequence ID" value="AAH04240.1"/>
    <property type="molecule type" value="mRNA"/>
</dbReference>
<dbReference type="EMBL" id="N30508">
    <property type="status" value="NOT_ANNOTATED_CDS"/>
    <property type="molecule type" value="mRNA"/>
</dbReference>
<dbReference type="CCDS" id="CCDS14419.1">
    <molecule id="Q99966-1"/>
</dbReference>
<dbReference type="CCDS" id="CCDS48136.1">
    <molecule id="Q99966-2"/>
</dbReference>
<dbReference type="PIR" id="JC6114">
    <property type="entry name" value="JC6114"/>
</dbReference>
<dbReference type="RefSeq" id="NP_001138357.1">
    <molecule id="Q99966-2"/>
    <property type="nucleotide sequence ID" value="NM_001144885.2"/>
</dbReference>
<dbReference type="RefSeq" id="NP_001138358.1">
    <molecule id="Q99966-1"/>
    <property type="nucleotide sequence ID" value="NM_001144886.2"/>
</dbReference>
<dbReference type="RefSeq" id="NP_001138359.1">
    <molecule id="Q99966-1"/>
    <property type="nucleotide sequence ID" value="NM_001144887.2"/>
</dbReference>
<dbReference type="RefSeq" id="NP_004134.2">
    <molecule id="Q99966-1"/>
    <property type="nucleotide sequence ID" value="NM_004143.4"/>
</dbReference>
<dbReference type="RefSeq" id="XP_011529260.1">
    <property type="nucleotide sequence ID" value="XM_011530958.1"/>
</dbReference>
<dbReference type="BioGRID" id="110572">
    <property type="interactions" value="37"/>
</dbReference>
<dbReference type="CORUM" id="Q99966"/>
<dbReference type="FunCoup" id="Q99966">
    <property type="interactions" value="1325"/>
</dbReference>
<dbReference type="IntAct" id="Q99966">
    <property type="interactions" value="38"/>
</dbReference>
<dbReference type="MINT" id="Q99966"/>
<dbReference type="STRING" id="9606.ENSP00000401764"/>
<dbReference type="GlyGen" id="Q99966">
    <property type="glycosylation" value="1 site, 1 N-linked glycan (1 site)"/>
</dbReference>
<dbReference type="iPTMnet" id="Q99966"/>
<dbReference type="PhosphoSitePlus" id="Q99966"/>
<dbReference type="BioMuta" id="CITED1"/>
<dbReference type="DMDM" id="296434447"/>
<dbReference type="jPOST" id="Q99966"/>
<dbReference type="MassIVE" id="Q99966"/>
<dbReference type="PaxDb" id="9606-ENSP00000401764"/>
<dbReference type="PeptideAtlas" id="Q99966"/>
<dbReference type="ProteomicsDB" id="78553">
    <molecule id="Q99966-1"/>
</dbReference>
<dbReference type="ProteomicsDB" id="78554">
    <molecule id="Q99966-2"/>
</dbReference>
<dbReference type="Antibodypedia" id="13694">
    <property type="antibodies" value="326 antibodies from 25 providers"/>
</dbReference>
<dbReference type="DNASU" id="4435"/>
<dbReference type="Ensembl" id="ENST00000246139.9">
    <molecule id="Q99966-1"/>
    <property type="protein sequence ID" value="ENSP00000246139.5"/>
    <property type="gene ID" value="ENSG00000125931.11"/>
</dbReference>
<dbReference type="Ensembl" id="ENST00000373619.7">
    <molecule id="Q99966-1"/>
    <property type="protein sequence ID" value="ENSP00000362721.3"/>
    <property type="gene ID" value="ENSG00000125931.11"/>
</dbReference>
<dbReference type="Ensembl" id="ENST00000431381.5">
    <molecule id="Q99966-2"/>
    <property type="protein sequence ID" value="ENSP00000388548.1"/>
    <property type="gene ID" value="ENSG00000125931.11"/>
</dbReference>
<dbReference type="Ensembl" id="ENST00000445983.5">
    <molecule id="Q99966-1"/>
    <property type="protein sequence ID" value="ENSP00000403274.1"/>
    <property type="gene ID" value="ENSG00000125931.11"/>
</dbReference>
<dbReference type="Ensembl" id="ENST00000453707.6">
    <molecule id="Q99966-2"/>
    <property type="protein sequence ID" value="ENSP00000401764.2"/>
    <property type="gene ID" value="ENSG00000125931.11"/>
</dbReference>
<dbReference type="Ensembl" id="ENST00000651998.1">
    <molecule id="Q99966-1"/>
    <property type="protein sequence ID" value="ENSP00000499148.1"/>
    <property type="gene ID" value="ENSG00000125931.11"/>
</dbReference>
<dbReference type="GeneID" id="4435"/>
<dbReference type="KEGG" id="hsa:4435"/>
<dbReference type="MANE-Select" id="ENST00000651998.1">
    <property type="protein sequence ID" value="ENSP00000499148.1"/>
    <property type="RefSeq nucleotide sequence ID" value="NM_001144887.2"/>
    <property type="RefSeq protein sequence ID" value="NP_001138359.1"/>
</dbReference>
<dbReference type="UCSC" id="uc004eas.4">
    <molecule id="Q99966-1"/>
    <property type="organism name" value="human"/>
</dbReference>
<dbReference type="AGR" id="HGNC:1986"/>
<dbReference type="CTD" id="4435"/>
<dbReference type="DisGeNET" id="4435"/>
<dbReference type="GeneCards" id="CITED1"/>
<dbReference type="HGNC" id="HGNC:1986">
    <property type="gene designation" value="CITED1"/>
</dbReference>
<dbReference type="HPA" id="ENSG00000125931">
    <property type="expression patterns" value="Tissue enriched (epididymis)"/>
</dbReference>
<dbReference type="MIM" id="300149">
    <property type="type" value="gene"/>
</dbReference>
<dbReference type="neXtProt" id="NX_Q99966"/>
<dbReference type="OpenTargets" id="ENSG00000125931"/>
<dbReference type="PharmGKB" id="PA26523"/>
<dbReference type="VEuPathDB" id="HostDB:ENSG00000125931"/>
<dbReference type="eggNOG" id="ENOG502RZBF">
    <property type="taxonomic scope" value="Eukaryota"/>
</dbReference>
<dbReference type="GeneTree" id="ENSGT00530000063624"/>
<dbReference type="HOGENOM" id="CLU_100627_0_0_1"/>
<dbReference type="InParanoid" id="Q99966"/>
<dbReference type="OrthoDB" id="8939897at2759"/>
<dbReference type="PAN-GO" id="Q99966">
    <property type="GO annotations" value="3 GO annotations based on evolutionary models"/>
</dbReference>
<dbReference type="PhylomeDB" id="Q99966"/>
<dbReference type="TreeFam" id="TF331915"/>
<dbReference type="PathwayCommons" id="Q99966"/>
<dbReference type="Reactome" id="R-HSA-8866907">
    <property type="pathway name" value="Activation of the TFAP2 (AP-2) family of transcription factors"/>
</dbReference>
<dbReference type="Reactome" id="R-HSA-9018519">
    <property type="pathway name" value="Estrogen-dependent gene expression"/>
</dbReference>
<dbReference type="SignaLink" id="Q99966"/>
<dbReference type="SIGNOR" id="Q99966"/>
<dbReference type="BioGRID-ORCS" id="4435">
    <property type="hits" value="16 hits in 779 CRISPR screens"/>
</dbReference>
<dbReference type="ChiTaRS" id="CITED1">
    <property type="organism name" value="human"/>
</dbReference>
<dbReference type="GeneWiki" id="CITED1"/>
<dbReference type="GenomeRNAi" id="4435"/>
<dbReference type="Pharos" id="Q99966">
    <property type="development level" value="Tbio"/>
</dbReference>
<dbReference type="PRO" id="PR:Q99966"/>
<dbReference type="Proteomes" id="UP000005640">
    <property type="component" value="Chromosome X"/>
</dbReference>
<dbReference type="RNAct" id="Q99966">
    <property type="molecule type" value="protein"/>
</dbReference>
<dbReference type="Bgee" id="ENSG00000125931">
    <property type="expression patterns" value="Expressed in right testis and 96 other cell types or tissues"/>
</dbReference>
<dbReference type="ExpressionAtlas" id="Q99966">
    <property type="expression patterns" value="baseline and differential"/>
</dbReference>
<dbReference type="GO" id="GO:0005737">
    <property type="term" value="C:cytoplasm"/>
    <property type="evidence" value="ECO:0000314"/>
    <property type="project" value="UniProtKB"/>
</dbReference>
<dbReference type="GO" id="GO:0005829">
    <property type="term" value="C:cytosol"/>
    <property type="evidence" value="ECO:0000314"/>
    <property type="project" value="UniProtKB"/>
</dbReference>
<dbReference type="GO" id="GO:0005654">
    <property type="term" value="C:nucleoplasm"/>
    <property type="evidence" value="ECO:0000304"/>
    <property type="project" value="Reactome"/>
</dbReference>
<dbReference type="GO" id="GO:0005634">
    <property type="term" value="C:nucleus"/>
    <property type="evidence" value="ECO:0000314"/>
    <property type="project" value="UniProtKB"/>
</dbReference>
<dbReference type="GO" id="GO:0003682">
    <property type="term" value="F:chromatin binding"/>
    <property type="evidence" value="ECO:0000250"/>
    <property type="project" value="UniProtKB"/>
</dbReference>
<dbReference type="GO" id="GO:0070410">
    <property type="term" value="F:co-SMAD binding"/>
    <property type="evidence" value="ECO:0000353"/>
    <property type="project" value="BHF-UCL"/>
</dbReference>
<dbReference type="GO" id="GO:0050693">
    <property type="term" value="F:LBD domain binding"/>
    <property type="evidence" value="ECO:0000314"/>
    <property type="project" value="UniProtKB"/>
</dbReference>
<dbReference type="GO" id="GO:0042803">
    <property type="term" value="F:protein homodimerization activity"/>
    <property type="evidence" value="ECO:0000314"/>
    <property type="project" value="UniProtKB"/>
</dbReference>
<dbReference type="GO" id="GO:0003713">
    <property type="term" value="F:transcription coactivator activity"/>
    <property type="evidence" value="ECO:0000314"/>
    <property type="project" value="UniProtKB"/>
</dbReference>
<dbReference type="GO" id="GO:0006915">
    <property type="term" value="P:apoptotic process"/>
    <property type="evidence" value="ECO:0007669"/>
    <property type="project" value="UniProtKB-KW"/>
</dbReference>
<dbReference type="GO" id="GO:0007420">
    <property type="term" value="P:brain development"/>
    <property type="evidence" value="ECO:0007669"/>
    <property type="project" value="Ensembl"/>
</dbReference>
<dbReference type="GO" id="GO:0001658">
    <property type="term" value="P:branching involved in ureteric bud morphogenesis"/>
    <property type="evidence" value="ECO:0000250"/>
    <property type="project" value="UniProtKB"/>
</dbReference>
<dbReference type="GO" id="GO:0060711">
    <property type="term" value="P:labyrinthine layer development"/>
    <property type="evidence" value="ECO:0007669"/>
    <property type="project" value="Ensembl"/>
</dbReference>
<dbReference type="GO" id="GO:0042438">
    <property type="term" value="P:melanin biosynthetic process"/>
    <property type="evidence" value="ECO:0000250"/>
    <property type="project" value="UniProtKB"/>
</dbReference>
<dbReference type="GO" id="GO:0030318">
    <property type="term" value="P:melanocyte differentiation"/>
    <property type="evidence" value="ECO:0000270"/>
    <property type="project" value="UniProtKB"/>
</dbReference>
<dbReference type="GO" id="GO:0060231">
    <property type="term" value="P:mesenchymal to epithelial transition"/>
    <property type="evidence" value="ECO:0000304"/>
    <property type="project" value="BHF-UCL"/>
</dbReference>
<dbReference type="GO" id="GO:0001656">
    <property type="term" value="P:metanephros development"/>
    <property type="evidence" value="ECO:0000304"/>
    <property type="project" value="BHF-UCL"/>
</dbReference>
<dbReference type="GO" id="GO:0045892">
    <property type="term" value="P:negative regulation of DNA-templated transcription"/>
    <property type="evidence" value="ECO:0000314"/>
    <property type="project" value="UniProtKB"/>
</dbReference>
<dbReference type="GO" id="GO:0043524">
    <property type="term" value="P:negative regulation of neuron apoptotic process"/>
    <property type="evidence" value="ECO:0000314"/>
    <property type="project" value="UniProtKB"/>
</dbReference>
<dbReference type="GO" id="GO:0045668">
    <property type="term" value="P:negative regulation of osteoblast differentiation"/>
    <property type="evidence" value="ECO:0000250"/>
    <property type="project" value="UniProtKB"/>
</dbReference>
<dbReference type="GO" id="GO:0030178">
    <property type="term" value="P:negative regulation of Wnt signaling pathway"/>
    <property type="evidence" value="ECO:0000304"/>
    <property type="project" value="BHF-UCL"/>
</dbReference>
<dbReference type="GO" id="GO:0006913">
    <property type="term" value="P:nucleocytoplasmic transport"/>
    <property type="evidence" value="ECO:0000314"/>
    <property type="project" value="UniProtKB"/>
</dbReference>
<dbReference type="GO" id="GO:0043473">
    <property type="term" value="P:pigmentation"/>
    <property type="evidence" value="ECO:0000270"/>
    <property type="project" value="UniProtKB"/>
</dbReference>
<dbReference type="GO" id="GO:0001890">
    <property type="term" value="P:placenta development"/>
    <property type="evidence" value="ECO:0000250"/>
    <property type="project" value="UniProtKB"/>
</dbReference>
<dbReference type="GO" id="GO:0045893">
    <property type="term" value="P:positive regulation of DNA-templated transcription"/>
    <property type="evidence" value="ECO:0000314"/>
    <property type="project" value="UniProtKB"/>
</dbReference>
<dbReference type="GO" id="GO:0010628">
    <property type="term" value="P:positive regulation of gene expression"/>
    <property type="evidence" value="ECO:0000250"/>
    <property type="project" value="UniProtKB"/>
</dbReference>
<dbReference type="GO" id="GO:1902462">
    <property type="term" value="P:positive regulation of mesenchymal stem cell proliferation"/>
    <property type="evidence" value="ECO:0000304"/>
    <property type="project" value="BHF-UCL"/>
</dbReference>
<dbReference type="GO" id="GO:0045944">
    <property type="term" value="P:positive regulation of transcription by RNA polymerase II"/>
    <property type="evidence" value="ECO:0000314"/>
    <property type="project" value="GO_Central"/>
</dbReference>
<dbReference type="GO" id="GO:0030511">
    <property type="term" value="P:positive regulation of transforming growth factor beta receptor signaling pathway"/>
    <property type="evidence" value="ECO:0000304"/>
    <property type="project" value="BHF-UCL"/>
</dbReference>
<dbReference type="GO" id="GO:0042981">
    <property type="term" value="P:regulation of apoptotic process"/>
    <property type="evidence" value="ECO:0000314"/>
    <property type="project" value="UniProtKB"/>
</dbReference>
<dbReference type="GO" id="GO:0090183">
    <property type="term" value="P:regulation of kidney development"/>
    <property type="evidence" value="ECO:0007669"/>
    <property type="project" value="Ensembl"/>
</dbReference>
<dbReference type="GO" id="GO:0006357">
    <property type="term" value="P:regulation of transcription by RNA polymerase II"/>
    <property type="evidence" value="ECO:0000304"/>
    <property type="project" value="ProtInc"/>
</dbReference>
<dbReference type="GO" id="GO:0051591">
    <property type="term" value="P:response to cAMP"/>
    <property type="evidence" value="ECO:0000250"/>
    <property type="project" value="UniProtKB"/>
</dbReference>
<dbReference type="GO" id="GO:0034097">
    <property type="term" value="P:response to cytokine"/>
    <property type="evidence" value="ECO:0000250"/>
    <property type="project" value="UniProtKB"/>
</dbReference>
<dbReference type="GO" id="GO:0043627">
    <property type="term" value="P:response to estrogen"/>
    <property type="evidence" value="ECO:0000314"/>
    <property type="project" value="UniProtKB"/>
</dbReference>
<dbReference type="GO" id="GO:0032868">
    <property type="term" value="P:response to insulin"/>
    <property type="evidence" value="ECO:0000250"/>
    <property type="project" value="UniProtKB"/>
</dbReference>
<dbReference type="GO" id="GO:0070555">
    <property type="term" value="P:response to interleukin-1"/>
    <property type="evidence" value="ECO:0000250"/>
    <property type="project" value="UniProtKB"/>
</dbReference>
<dbReference type="GO" id="GO:0071105">
    <property type="term" value="P:response to interleukin-11"/>
    <property type="evidence" value="ECO:0000250"/>
    <property type="project" value="UniProtKB"/>
</dbReference>
<dbReference type="GO" id="GO:0070669">
    <property type="term" value="P:response to interleukin-2"/>
    <property type="evidence" value="ECO:0000250"/>
    <property type="project" value="UniProtKB"/>
</dbReference>
<dbReference type="GO" id="GO:0070670">
    <property type="term" value="P:response to interleukin-4"/>
    <property type="evidence" value="ECO:0000250"/>
    <property type="project" value="UniProtKB"/>
</dbReference>
<dbReference type="GO" id="GO:0070741">
    <property type="term" value="P:response to interleukin-6"/>
    <property type="evidence" value="ECO:0000250"/>
    <property type="project" value="UniProtKB"/>
</dbReference>
<dbReference type="GO" id="GO:0071104">
    <property type="term" value="P:response to interleukin-9"/>
    <property type="evidence" value="ECO:0000250"/>
    <property type="project" value="UniProtKB"/>
</dbReference>
<dbReference type="GO" id="GO:0032496">
    <property type="term" value="P:response to lipopolysaccharide"/>
    <property type="evidence" value="ECO:0000250"/>
    <property type="project" value="UniProtKB"/>
</dbReference>
<dbReference type="GO" id="GO:0071107">
    <property type="term" value="P:response to parathyroid hormone"/>
    <property type="evidence" value="ECO:0000250"/>
    <property type="project" value="UniProtKB"/>
</dbReference>
<dbReference type="GO" id="GO:0071559">
    <property type="term" value="P:response to transforming growth factor beta"/>
    <property type="evidence" value="ECO:0000314"/>
    <property type="project" value="UniProtKB"/>
</dbReference>
<dbReference type="GO" id="GO:0034341">
    <property type="term" value="P:response to type II interferon"/>
    <property type="evidence" value="ECO:0000250"/>
    <property type="project" value="UniProtKB"/>
</dbReference>
<dbReference type="GO" id="GO:0060395">
    <property type="term" value="P:SMAD protein signal transduction"/>
    <property type="evidence" value="ECO:0000314"/>
    <property type="project" value="BHF-UCL"/>
</dbReference>
<dbReference type="GO" id="GO:0007179">
    <property type="term" value="P:transforming growth factor beta receptor signaling pathway"/>
    <property type="evidence" value="ECO:0000314"/>
    <property type="project" value="BHF-UCL"/>
</dbReference>
<dbReference type="GO" id="GO:0001570">
    <property type="term" value="P:vasculogenesis"/>
    <property type="evidence" value="ECO:0007669"/>
    <property type="project" value="Ensembl"/>
</dbReference>
<dbReference type="FunFam" id="6.10.140.2200:FF:000002">
    <property type="entry name" value="cbp/p300-interacting transactivator 1 isoform X2"/>
    <property type="match status" value="1"/>
</dbReference>
<dbReference type="Gene3D" id="6.10.140.2200">
    <property type="match status" value="1"/>
</dbReference>
<dbReference type="InterPro" id="IPR007576">
    <property type="entry name" value="CITED"/>
</dbReference>
<dbReference type="PANTHER" id="PTHR17045:SF6">
    <property type="entry name" value="CBP_P300-INTERACTING TRANSACTIVATOR 1"/>
    <property type="match status" value="1"/>
</dbReference>
<dbReference type="PANTHER" id="PTHR17045">
    <property type="entry name" value="MELANOCYTE SPECIFIC GENE RELATED CITED"/>
    <property type="match status" value="1"/>
</dbReference>
<dbReference type="Pfam" id="PF04487">
    <property type="entry name" value="CITED"/>
    <property type="match status" value="1"/>
</dbReference>
<sequence length="193" mass="19896">MPTTSRPALDVKGGTSPAKEDANQEMSSVAYSNLAVKDRKAVAILHYPGVASNGTKASGAPTSSSGSPIGSPTTTPPTKPPSFNLHPAPHLLASMHLQKLNSQYQGMAAATPGQPGEAGPLQNWDFGAQAGGAESLSPSAGAQSPAIIDSDPVDEEVLMSLVVELGLDRANELPELWLGQNEFDFTADFPSSC</sequence>
<feature type="chain" id="PRO_0000144724" description="Cbp/p300-interacting transactivator 1">
    <location>
        <begin position="1"/>
        <end position="193"/>
    </location>
</feature>
<feature type="region of interest" description="Disordered" evidence="2">
    <location>
        <begin position="1"/>
        <end position="26"/>
    </location>
</feature>
<feature type="region of interest" description="Disordered" evidence="2">
    <location>
        <begin position="50"/>
        <end position="88"/>
    </location>
</feature>
<feature type="region of interest" description="Disordered" evidence="2">
    <location>
        <begin position="106"/>
        <end position="147"/>
    </location>
</feature>
<feature type="short sequence motif" description="Nuclear export signal">
    <location>
        <begin position="158"/>
        <end position="167"/>
    </location>
</feature>
<feature type="compositionally biased region" description="Low complexity" evidence="2">
    <location>
        <begin position="54"/>
        <end position="73"/>
    </location>
</feature>
<feature type="splice variant" id="VSP_039897" description="In isoform 2." evidence="13">
    <original>M</original>
    <variation>MEPSAQQLQLAASLPANLSNFCQGSEM</variation>
    <location>
        <position position="1"/>
    </location>
</feature>
<feature type="sequence variant" id="VAR_053038" description="In dbSNP:rs3012627." evidence="6 8 10 12">
    <original>H</original>
    <variation>Q</variation>
    <location>
        <position position="96"/>
    </location>
</feature>
<feature type="mutagenesis site" description="Strongly reduces phosphorylation but does not interfere with its NES-dependent nuclear export; when associated with A-63; A-67; A-71 and A-137." evidence="7">
    <original>S</original>
    <variation>A</variation>
    <location>
        <position position="16"/>
    </location>
</feature>
<feature type="mutagenesis site" description="Strongly reduces phosphorylation but does not interfere with its NES-dependent nuclear export; when associated with A-16; A-67; A-71 and A-137." evidence="7">
    <original>S</original>
    <variation>A</variation>
    <location>
        <position position="63"/>
    </location>
</feature>
<feature type="mutagenesis site" description="Strongly reduces phosphorylation but does not interfere with its NES-dependent nuclear export; when associated with A-16; A-63; A-71 and A-137." evidence="7">
    <original>S</original>
    <variation>A</variation>
    <location>
        <position position="67"/>
    </location>
</feature>
<feature type="mutagenesis site" description="Strongly reduces phosphorylation but does not interfere with its NES-dependent nuclear export; when associated with A-16; A-63; A-67 and A-137." evidence="7">
    <original>S</original>
    <variation>A</variation>
    <location>
        <position position="71"/>
    </location>
</feature>
<feature type="mutagenesis site" description="Does not change subcellular localization; when associated with A-95.">
    <original>L</original>
    <variation>A</variation>
    <location>
        <position position="91"/>
    </location>
</feature>
<feature type="mutagenesis site" description="Does not change subcellular localization; when associated with A-91.">
    <original>M</original>
    <variation>A</variation>
    <location>
        <position position="95"/>
    </location>
</feature>
<feature type="mutagenesis site" description="Strongly reduces phosphorylation; when associated with A-16; A-63; A-67 and A-71." evidence="7">
    <original>S</original>
    <variation>A</variation>
    <location>
        <position position="137"/>
    </location>
</feature>
<feature type="mutagenesis site" description="Does not inhibit interaction with ESR1 and ER-coactivation activity." evidence="5">
    <original>EE</original>
    <variation>AA</variation>
    <location>
        <begin position="155"/>
        <end position="156"/>
    </location>
</feature>
<feature type="mutagenesis site" description="Inhibits interaction with ESR1 and ER-coactivation activity." evidence="5">
    <original>VL</original>
    <variation>AA</variation>
    <location>
        <begin position="157"/>
        <end position="158"/>
    </location>
</feature>
<feature type="mutagenesis site" description="Does not inhibit interaction with ESR1 and ER-coactivation activity." evidence="5">
    <original>MS</original>
    <variation>AA</variation>
    <location>
        <begin position="159"/>
        <end position="160"/>
    </location>
</feature>
<feature type="mutagenesis site" description="Does not inhibit interaction with ESR1 and ER-coactivation activity." evidence="5">
    <original>LV</original>
    <variation>AA</variation>
    <location>
        <begin position="161"/>
        <end position="162"/>
    </location>
</feature>
<feature type="mutagenesis site" description="Does not inhibit interaction with ESR1 and ER-coactivation activity." evidence="5">
    <original>VE</original>
    <variation>AA</variation>
    <location>
        <begin position="163"/>
        <end position="164"/>
    </location>
</feature>
<feature type="mutagenesis site" description="Does not inhibit interaction with ESR1 and ER-coactivation activity. Localizes mainly in the nucleus; when associated with A-167." evidence="5">
    <original>L</original>
    <variation>A</variation>
    <location>
        <position position="165"/>
    </location>
</feature>
<feature type="mutagenesis site" description="Does not inhibit interaction with ESR1 and ER-coactivation activity. Localizes mainly in the nucleus; when associated with A-165." evidence="5">
    <original>GL</original>
    <variation>AA</variation>
    <location>
        <begin position="166"/>
        <end position="167"/>
    </location>
</feature>
<feature type="mutagenesis site" description="Does not change subcellular localization; when associated with A-178.">
    <original>L</original>
    <variation>A</variation>
    <location>
        <position position="176"/>
    </location>
</feature>
<feature type="mutagenesis site" description="Does not change subcellular localization; when associated with A-176.">
    <original>L</original>
    <variation>A</variation>
    <location>
        <position position="178"/>
    </location>
</feature>
<evidence type="ECO:0000250" key="1"/>
<evidence type="ECO:0000256" key="2">
    <source>
        <dbReference type="SAM" id="MobiDB-lite"/>
    </source>
</evidence>
<evidence type="ECO:0000269" key="3">
    <source>
    </source>
</evidence>
<evidence type="ECO:0000269" key="4">
    <source>
    </source>
</evidence>
<evidence type="ECO:0000269" key="5">
    <source>
    </source>
</evidence>
<evidence type="ECO:0000269" key="6">
    <source>
    </source>
</evidence>
<evidence type="ECO:0000269" key="7">
    <source>
    </source>
</evidence>
<evidence type="ECO:0000269" key="8">
    <source>
    </source>
</evidence>
<evidence type="ECO:0000269" key="9">
    <source>
    </source>
</evidence>
<evidence type="ECO:0000269" key="10">
    <source>
    </source>
</evidence>
<evidence type="ECO:0000269" key="11">
    <source>
    </source>
</evidence>
<evidence type="ECO:0000269" key="12">
    <source ref="4"/>
</evidence>
<evidence type="ECO:0000303" key="13">
    <source ref="6"/>
</evidence>
<evidence type="ECO:0000305" key="14"/>
<gene>
    <name type="primary">CITED1</name>
    <name type="synonym">MSG1</name>
</gene>
<organism>
    <name type="scientific">Homo sapiens</name>
    <name type="common">Human</name>
    <dbReference type="NCBI Taxonomy" id="9606"/>
    <lineage>
        <taxon>Eukaryota</taxon>
        <taxon>Metazoa</taxon>
        <taxon>Chordata</taxon>
        <taxon>Craniata</taxon>
        <taxon>Vertebrata</taxon>
        <taxon>Euteleostomi</taxon>
        <taxon>Mammalia</taxon>
        <taxon>Eutheria</taxon>
        <taxon>Euarchontoglires</taxon>
        <taxon>Primates</taxon>
        <taxon>Haplorrhini</taxon>
        <taxon>Catarrhini</taxon>
        <taxon>Hominidae</taxon>
        <taxon>Homo</taxon>
    </lineage>
</organism>
<proteinExistence type="evidence at protein level"/>
<name>CITE1_HUMAN</name>
<protein>
    <recommendedName>
        <fullName>Cbp/p300-interacting transactivator 1</fullName>
    </recommendedName>
    <alternativeName>
        <fullName>Melanocyte-specific protein 1</fullName>
    </alternativeName>
</protein>